<reference key="1">
    <citation type="submission" date="1994-09" db="EMBL/GenBank/DDBJ databases">
        <authorList>
            <person name="Belin D."/>
        </authorList>
    </citation>
    <scope>NUCLEOTIDE SEQUENCE [MRNA]</scope>
</reference>
<reference key="2">
    <citation type="journal article" date="2004" name="Genome Res.">
        <title>The status, quality, and expansion of the NIH full-length cDNA project: the Mammalian Gene Collection (MGC).</title>
        <authorList>
            <consortium name="The MGC Project Team"/>
        </authorList>
    </citation>
    <scope>NUCLEOTIDE SEQUENCE [LARGE SCALE MRNA]</scope>
</reference>
<reference key="3">
    <citation type="journal article" date="1993" name="EMBO J.">
        <title>Protease-nexin I as an androgen-dependent secretory product of the murine seminal vesicle.</title>
        <authorList>
            <person name="Vassalli J.-D."/>
            <person name="Huarte J."/>
            <person name="Bosco D."/>
            <person name="Sappino A.P."/>
            <person name="Sappino N."/>
            <person name="Velardi A."/>
            <person name="Wohlwend A."/>
            <person name="Erno H."/>
            <person name="Monard D."/>
            <person name="Belin D."/>
        </authorList>
    </citation>
    <scope>NUCLEOTIDE SEQUENCE [GENOMIC DNA / MRNA] OF 1-366</scope>
    <source>
        <strain>BALB/cJ</strain>
    </source>
</reference>
<reference key="4">
    <citation type="journal article" date="2010" name="Cell">
        <title>A tissue-specific atlas of mouse protein phosphorylation and expression.</title>
        <authorList>
            <person name="Huttlin E.L."/>
            <person name="Jedrychowski M.P."/>
            <person name="Elias J.E."/>
            <person name="Goswami T."/>
            <person name="Rad R."/>
            <person name="Beausoleil S.A."/>
            <person name="Villen J."/>
            <person name="Haas W."/>
            <person name="Sowa M.E."/>
            <person name="Gygi S.P."/>
        </authorList>
    </citation>
    <scope>IDENTIFICATION BY MASS SPECTROMETRY [LARGE SCALE ANALYSIS]</scope>
    <source>
        <tissue>Brain</tissue>
    </source>
</reference>
<keyword id="KW-0217">Developmental protein</keyword>
<keyword id="KW-0221">Differentiation</keyword>
<keyword id="KW-0325">Glycoprotein</keyword>
<keyword id="KW-0358">Heparin-binding</keyword>
<keyword id="KW-0524">Neurogenesis</keyword>
<keyword id="KW-0646">Protease inhibitor</keyword>
<keyword id="KW-1185">Reference proteome</keyword>
<keyword id="KW-0964">Secreted</keyword>
<keyword id="KW-0722">Serine protease inhibitor</keyword>
<keyword id="KW-0732">Signal</keyword>
<gene>
    <name type="primary">Serpine2</name>
    <name type="synonym">Pi7</name>
    <name type="synonym">Pn1</name>
    <name type="synonym">Spi4</name>
</gene>
<name>GDN_MOUSE</name>
<organism>
    <name type="scientific">Mus musculus</name>
    <name type="common">Mouse</name>
    <dbReference type="NCBI Taxonomy" id="10090"/>
    <lineage>
        <taxon>Eukaryota</taxon>
        <taxon>Metazoa</taxon>
        <taxon>Chordata</taxon>
        <taxon>Craniata</taxon>
        <taxon>Vertebrata</taxon>
        <taxon>Euteleostomi</taxon>
        <taxon>Mammalia</taxon>
        <taxon>Eutheria</taxon>
        <taxon>Euarchontoglires</taxon>
        <taxon>Glires</taxon>
        <taxon>Rodentia</taxon>
        <taxon>Myomorpha</taxon>
        <taxon>Muroidea</taxon>
        <taxon>Muridae</taxon>
        <taxon>Murinae</taxon>
        <taxon>Mus</taxon>
        <taxon>Mus</taxon>
    </lineage>
</organism>
<feature type="signal peptide" evidence="1">
    <location>
        <begin position="1"/>
        <end position="19"/>
    </location>
</feature>
<feature type="chain" id="PRO_0000032505" description="Glia-derived nexin">
    <location>
        <begin position="20"/>
        <end position="397"/>
    </location>
</feature>
<feature type="site" description="Reactive bond" evidence="1">
    <location>
        <begin position="364"/>
        <end position="365"/>
    </location>
</feature>
<feature type="glycosylation site" description="N-linked (GlcNAc...) asparagine" evidence="2">
    <location>
        <position position="159"/>
    </location>
</feature>
<feature type="sequence conflict" description="In Ref. 2; AAH10675." evidence="3" ref="2">
    <original>I</original>
    <variation>V</variation>
    <location>
        <position position="313"/>
    </location>
</feature>
<proteinExistence type="evidence at protein level"/>
<protein>
    <recommendedName>
        <fullName>Glia-derived nexin</fullName>
        <shortName>GDN</shortName>
    </recommendedName>
    <alternativeName>
        <fullName>Peptidase inhibitor 7</fullName>
        <shortName>PI-7</shortName>
    </alternativeName>
    <alternativeName>
        <fullName>Protease nexin 1</fullName>
        <shortName>PN-1</shortName>
    </alternativeName>
    <alternativeName>
        <fullName>Protease nexin I</fullName>
    </alternativeName>
    <alternativeName>
        <fullName>Serine protease-inhibitor 4</fullName>
    </alternativeName>
    <alternativeName>
        <fullName>Serpin E2</fullName>
    </alternativeName>
</protein>
<accession>Q07235</accession>
<accession>Q921T7</accession>
<comment type="function">
    <text>Serine protease inhibitor with activity toward thrombin, trypsin, and urokinase. Promotes neurite extension by inhibiting thrombin. Binds heparin.</text>
</comment>
<comment type="subcellular location">
    <subcellularLocation>
        <location>Secreted</location>
        <location>Extracellular space</location>
    </subcellularLocation>
</comment>
<comment type="tissue specificity">
    <text>Most abundant in seminal vesicles.</text>
</comment>
<comment type="similarity">
    <text evidence="3">Belongs to the serpin family.</text>
</comment>
<dbReference type="EMBL" id="X70296">
    <property type="protein sequence ID" value="CAA49777.1"/>
    <property type="molecule type" value="mRNA"/>
</dbReference>
<dbReference type="EMBL" id="BC010675">
    <property type="protein sequence ID" value="AAH10675.1"/>
    <property type="molecule type" value="mRNA"/>
</dbReference>
<dbReference type="EMBL" id="X70946">
    <property type="protein sequence ID" value="CAA50285.1"/>
    <property type="molecule type" value="Genomic_DNA"/>
</dbReference>
<dbReference type="CCDS" id="CCDS15092.1"/>
<dbReference type="PIR" id="I48717">
    <property type="entry name" value="I48717"/>
</dbReference>
<dbReference type="RefSeq" id="NP_033281.1">
    <property type="nucleotide sequence ID" value="NM_009255.4"/>
</dbReference>
<dbReference type="RefSeq" id="XP_006496522.1">
    <property type="nucleotide sequence ID" value="XM_006496459.5"/>
</dbReference>
<dbReference type="SMR" id="Q07235"/>
<dbReference type="BioGRID" id="203445">
    <property type="interactions" value="8"/>
</dbReference>
<dbReference type="FunCoup" id="Q07235">
    <property type="interactions" value="325"/>
</dbReference>
<dbReference type="IntAct" id="Q07235">
    <property type="interactions" value="1"/>
</dbReference>
<dbReference type="MINT" id="Q07235"/>
<dbReference type="STRING" id="10090.ENSMUSP00000027467"/>
<dbReference type="MEROPS" id="I04.021"/>
<dbReference type="GlyConnect" id="2336">
    <property type="glycosylation" value="1 N-Linked glycan (1 site)"/>
</dbReference>
<dbReference type="GlyCosmos" id="Q07235">
    <property type="glycosylation" value="2 sites, 1 glycan"/>
</dbReference>
<dbReference type="GlyGen" id="Q07235">
    <property type="glycosylation" value="2 sites, 2 N-linked glycans (1 site)"/>
</dbReference>
<dbReference type="iPTMnet" id="Q07235"/>
<dbReference type="PhosphoSitePlus" id="Q07235"/>
<dbReference type="CPTAC" id="non-CPTAC-3982"/>
<dbReference type="jPOST" id="Q07235"/>
<dbReference type="PaxDb" id="10090-ENSMUSP00000027467"/>
<dbReference type="PeptideAtlas" id="Q07235"/>
<dbReference type="ProteomicsDB" id="273043"/>
<dbReference type="Pumba" id="Q07235"/>
<dbReference type="ABCD" id="Q07235">
    <property type="antibodies" value="4 sequenced antibodies"/>
</dbReference>
<dbReference type="Antibodypedia" id="34366">
    <property type="antibodies" value="409 antibodies from 31 providers"/>
</dbReference>
<dbReference type="DNASU" id="20720"/>
<dbReference type="Ensembl" id="ENSMUST00000027467.11">
    <property type="protein sequence ID" value="ENSMUSP00000027467.5"/>
    <property type="gene ID" value="ENSMUSG00000026249.11"/>
</dbReference>
<dbReference type="GeneID" id="20720"/>
<dbReference type="KEGG" id="mmu:20720"/>
<dbReference type="UCSC" id="uc007bqz.2">
    <property type="organism name" value="mouse"/>
</dbReference>
<dbReference type="AGR" id="MGI:101780"/>
<dbReference type="CTD" id="5270"/>
<dbReference type="MGI" id="MGI:101780">
    <property type="gene designation" value="Serpine2"/>
</dbReference>
<dbReference type="VEuPathDB" id="HostDB:ENSMUSG00000026249"/>
<dbReference type="eggNOG" id="KOG2392">
    <property type="taxonomic scope" value="Eukaryota"/>
</dbReference>
<dbReference type="GeneTree" id="ENSGT00940000158424"/>
<dbReference type="HOGENOM" id="CLU_023330_0_4_1"/>
<dbReference type="InParanoid" id="Q07235"/>
<dbReference type="OMA" id="PNNTKMR"/>
<dbReference type="OrthoDB" id="671595at2759"/>
<dbReference type="PhylomeDB" id="Q07235"/>
<dbReference type="TreeFam" id="TF352620"/>
<dbReference type="Reactome" id="R-MMU-140837">
    <property type="pathway name" value="Intrinsic Pathway of Fibrin Clot Formation"/>
</dbReference>
<dbReference type="Reactome" id="R-MMU-140875">
    <property type="pathway name" value="Common Pathway of Fibrin Clot Formation"/>
</dbReference>
<dbReference type="Reactome" id="R-MMU-75205">
    <property type="pathway name" value="Dissolution of Fibrin Clot"/>
</dbReference>
<dbReference type="BioGRID-ORCS" id="20720">
    <property type="hits" value="2 hits in 77 CRISPR screens"/>
</dbReference>
<dbReference type="ChiTaRS" id="Serpine2">
    <property type="organism name" value="mouse"/>
</dbReference>
<dbReference type="PRO" id="PR:Q07235"/>
<dbReference type="Proteomes" id="UP000000589">
    <property type="component" value="Chromosome 1"/>
</dbReference>
<dbReference type="RNAct" id="Q07235">
    <property type="molecule type" value="protein"/>
</dbReference>
<dbReference type="Bgee" id="ENSMUSG00000026249">
    <property type="expression patterns" value="Expressed in seminal vesicle and 327 other cell types or tissues"/>
</dbReference>
<dbReference type="ExpressionAtlas" id="Q07235">
    <property type="expression patterns" value="baseline and differential"/>
</dbReference>
<dbReference type="GO" id="GO:0005829">
    <property type="term" value="C:cytosol"/>
    <property type="evidence" value="ECO:0007669"/>
    <property type="project" value="Ensembl"/>
</dbReference>
<dbReference type="GO" id="GO:0005576">
    <property type="term" value="C:extracellular region"/>
    <property type="evidence" value="ECO:0000314"/>
    <property type="project" value="BHF-UCL"/>
</dbReference>
<dbReference type="GO" id="GO:0005615">
    <property type="term" value="C:extracellular space"/>
    <property type="evidence" value="ECO:0007005"/>
    <property type="project" value="BHF-UCL"/>
</dbReference>
<dbReference type="GO" id="GO:0031594">
    <property type="term" value="C:neuromuscular junction"/>
    <property type="evidence" value="ECO:0000314"/>
    <property type="project" value="BHF-UCL"/>
</dbReference>
<dbReference type="GO" id="GO:0031091">
    <property type="term" value="C:platelet alpha granule"/>
    <property type="evidence" value="ECO:0000266"/>
    <property type="project" value="MGI"/>
</dbReference>
<dbReference type="GO" id="GO:0008201">
    <property type="term" value="F:heparin binding"/>
    <property type="evidence" value="ECO:0007669"/>
    <property type="project" value="UniProtKB-KW"/>
</dbReference>
<dbReference type="GO" id="GO:0004867">
    <property type="term" value="F:serine-type endopeptidase inhibitor activity"/>
    <property type="evidence" value="ECO:0000315"/>
    <property type="project" value="BHF-UCL"/>
</dbReference>
<dbReference type="GO" id="GO:0005102">
    <property type="term" value="F:signaling receptor binding"/>
    <property type="evidence" value="ECO:0000316"/>
    <property type="project" value="MGI"/>
</dbReference>
<dbReference type="GO" id="GO:0007596">
    <property type="term" value="P:blood coagulation"/>
    <property type="evidence" value="ECO:0000315"/>
    <property type="project" value="MGI"/>
</dbReference>
<dbReference type="GO" id="GO:0030154">
    <property type="term" value="P:cell differentiation"/>
    <property type="evidence" value="ECO:0007669"/>
    <property type="project" value="UniProtKB-KW"/>
</dbReference>
<dbReference type="GO" id="GO:0021683">
    <property type="term" value="P:cerebellar granular layer morphogenesis"/>
    <property type="evidence" value="ECO:0000315"/>
    <property type="project" value="MGI"/>
</dbReference>
<dbReference type="GO" id="GO:0050974">
    <property type="term" value="P:detection of mechanical stimulus involved in sensory perception"/>
    <property type="evidence" value="ECO:0000315"/>
    <property type="project" value="MGI"/>
</dbReference>
<dbReference type="GO" id="GO:0060384">
    <property type="term" value="P:innervation"/>
    <property type="evidence" value="ECO:0000315"/>
    <property type="project" value="MGI"/>
</dbReference>
<dbReference type="GO" id="GO:0060291">
    <property type="term" value="P:long-term synaptic potentiation"/>
    <property type="evidence" value="ECO:0000315"/>
    <property type="project" value="MGI"/>
</dbReference>
<dbReference type="GO" id="GO:0042628">
    <property type="term" value="P:mating plug formation"/>
    <property type="evidence" value="ECO:0000315"/>
    <property type="project" value="MGI"/>
</dbReference>
<dbReference type="GO" id="GO:0030308">
    <property type="term" value="P:negative regulation of cell growth"/>
    <property type="evidence" value="ECO:0000316"/>
    <property type="project" value="MGI"/>
</dbReference>
<dbReference type="GO" id="GO:0008285">
    <property type="term" value="P:negative regulation of cell population proliferation"/>
    <property type="evidence" value="ECO:0000316"/>
    <property type="project" value="MGI"/>
</dbReference>
<dbReference type="GO" id="GO:0051898">
    <property type="term" value="P:negative regulation of phosphatidylinositol 3-kinase/protein kinase B signal transduction"/>
    <property type="evidence" value="ECO:0000316"/>
    <property type="project" value="MGI"/>
</dbReference>
<dbReference type="GO" id="GO:0010757">
    <property type="term" value="P:negative regulation of plasminogen activation"/>
    <property type="evidence" value="ECO:0000315"/>
    <property type="project" value="BHF-UCL"/>
</dbReference>
<dbReference type="GO" id="GO:0010544">
    <property type="term" value="P:negative regulation of platelet activation"/>
    <property type="evidence" value="ECO:0000315"/>
    <property type="project" value="BHF-UCL"/>
</dbReference>
<dbReference type="GO" id="GO:0090331">
    <property type="term" value="P:negative regulation of platelet aggregation"/>
    <property type="evidence" value="ECO:0000315"/>
    <property type="project" value="BHF-UCL"/>
</dbReference>
<dbReference type="GO" id="GO:0042177">
    <property type="term" value="P:negative regulation of protein catabolic process"/>
    <property type="evidence" value="ECO:0000315"/>
    <property type="project" value="MGI"/>
</dbReference>
<dbReference type="GO" id="GO:0010955">
    <property type="term" value="P:negative regulation of protein processing"/>
    <property type="evidence" value="ECO:0000305"/>
    <property type="project" value="BHF-UCL"/>
</dbReference>
<dbReference type="GO" id="GO:0045879">
    <property type="term" value="P:negative regulation of smoothened signaling pathway"/>
    <property type="evidence" value="ECO:0000316"/>
    <property type="project" value="MGI"/>
</dbReference>
<dbReference type="GO" id="GO:0010766">
    <property type="term" value="P:negative regulation of sodium ion transport"/>
    <property type="evidence" value="ECO:0000315"/>
    <property type="project" value="MGI"/>
</dbReference>
<dbReference type="GO" id="GO:0030168">
    <property type="term" value="P:platelet activation"/>
    <property type="evidence" value="ECO:0000315"/>
    <property type="project" value="MGI"/>
</dbReference>
<dbReference type="GO" id="GO:0048711">
    <property type="term" value="P:positive regulation of astrocyte differentiation"/>
    <property type="evidence" value="ECO:0007669"/>
    <property type="project" value="Ensembl"/>
</dbReference>
<dbReference type="GO" id="GO:0030163">
    <property type="term" value="P:protein catabolic process"/>
    <property type="evidence" value="ECO:0000315"/>
    <property type="project" value="MGI"/>
</dbReference>
<dbReference type="GO" id="GO:0051966">
    <property type="term" value="P:regulation of synaptic transmission, glutamatergic"/>
    <property type="evidence" value="ECO:0000315"/>
    <property type="project" value="MGI"/>
</dbReference>
<dbReference type="GO" id="GO:0048505">
    <property type="term" value="P:regulation of timing of cell differentiation"/>
    <property type="evidence" value="ECO:0000315"/>
    <property type="project" value="MGI"/>
</dbReference>
<dbReference type="GO" id="GO:0009611">
    <property type="term" value="P:response to wounding"/>
    <property type="evidence" value="ECO:0000315"/>
    <property type="project" value="MGI"/>
</dbReference>
<dbReference type="GO" id="GO:0032940">
    <property type="term" value="P:secretion by cell"/>
    <property type="evidence" value="ECO:0000315"/>
    <property type="project" value="MGI"/>
</dbReference>
<dbReference type="GO" id="GO:0033363">
    <property type="term" value="P:secretory granule organization"/>
    <property type="evidence" value="ECO:0000315"/>
    <property type="project" value="MGI"/>
</dbReference>
<dbReference type="GO" id="GO:0061108">
    <property type="term" value="P:seminal vesicle epithelium development"/>
    <property type="evidence" value="ECO:0000315"/>
    <property type="project" value="MGI"/>
</dbReference>
<dbReference type="CDD" id="cd19573">
    <property type="entry name" value="serpinE2_GDN"/>
    <property type="match status" value="1"/>
</dbReference>
<dbReference type="FunFam" id="3.30.497.10:FF:000006">
    <property type="entry name" value="Plasminogen activator inhibitor 1"/>
    <property type="match status" value="1"/>
</dbReference>
<dbReference type="FunFam" id="2.30.39.10:FF:000035">
    <property type="entry name" value="Serine protease inhibitor (serpin) 16"/>
    <property type="match status" value="1"/>
</dbReference>
<dbReference type="Gene3D" id="2.30.39.10">
    <property type="entry name" value="Alpha-1-antitrypsin, domain 1"/>
    <property type="match status" value="1"/>
</dbReference>
<dbReference type="Gene3D" id="3.30.497.10">
    <property type="entry name" value="Antithrombin, subunit I, domain 2"/>
    <property type="match status" value="1"/>
</dbReference>
<dbReference type="InterPro" id="IPR023795">
    <property type="entry name" value="Serpin_CS"/>
</dbReference>
<dbReference type="InterPro" id="IPR023796">
    <property type="entry name" value="Serpin_dom"/>
</dbReference>
<dbReference type="InterPro" id="IPR000215">
    <property type="entry name" value="Serpin_fam"/>
</dbReference>
<dbReference type="InterPro" id="IPR036186">
    <property type="entry name" value="Serpin_sf"/>
</dbReference>
<dbReference type="InterPro" id="IPR042178">
    <property type="entry name" value="Serpin_sf_1"/>
</dbReference>
<dbReference type="InterPro" id="IPR042185">
    <property type="entry name" value="Serpin_sf_2"/>
</dbReference>
<dbReference type="PANTHER" id="PTHR11461:SF48">
    <property type="entry name" value="GLIA-DERIVED NEXIN"/>
    <property type="match status" value="1"/>
</dbReference>
<dbReference type="PANTHER" id="PTHR11461">
    <property type="entry name" value="SERINE PROTEASE INHIBITOR, SERPIN"/>
    <property type="match status" value="1"/>
</dbReference>
<dbReference type="Pfam" id="PF00079">
    <property type="entry name" value="Serpin"/>
    <property type="match status" value="1"/>
</dbReference>
<dbReference type="SMART" id="SM00093">
    <property type="entry name" value="SERPIN"/>
    <property type="match status" value="1"/>
</dbReference>
<dbReference type="SUPFAM" id="SSF56574">
    <property type="entry name" value="Serpins"/>
    <property type="match status" value="1"/>
</dbReference>
<dbReference type="PROSITE" id="PS00284">
    <property type="entry name" value="SERPIN"/>
    <property type="match status" value="1"/>
</dbReference>
<evidence type="ECO:0000250" key="1"/>
<evidence type="ECO:0000255" key="2"/>
<evidence type="ECO:0000305" key="3"/>
<sequence>MNWHFPFFILTTVTLYSVHSQFNSLSLEELGSNTGIQVFNQIIKSRPHENVVVSPHGIASILGMLQLGADGKTKKQLSTVMRYNVNGVGKVLKKINKAIVSKKNKDIVTVANAVFLRNGFKMEVPFAVRNKDVFQCEVQNVNFQDPASASESINFWVKNETRGMIDNLLSPNLIDGALTRLVLVNAVYFKGLWKSRFQPESTKKRTFVAGDGKSYQVPMLAQLSVFRSGSTRTPNGLWYNFIELPYHGESISMLIALPTESSTPLSAIIPHITTKTIDSWMNTMVPKRMQLVLPKFTAVAQTDLKEPLKALGITEMFEPSKANFTKITRSESLHVSHILQKAKIEVSEDGTKASAATTAILIARSSPPWFIVDRPFLFSIRHNPTGAILFLGQVNKP</sequence>